<sequence>MASEDQSAARSTGKVNWFNASKGYGFITPDDGSVELFVHQSSIVSEGYRSLTVGDAVEFAITQGSDGKTKAVNVTAPGGGSLKKENNSRGNGARRGGGGSGCYNCGELGHISKDCGIGGGGGGGERRSRGGEGCYNCGDTGHFARDCTSAGNGDQRGATKGGNDGCYTCGDVGHVARDCTQKSVGNGDQRGAVKGGNDGCYTCGDVGHFARDCTQKVAAGNVRSGGGGSGTCYSCGGVGHIARDCATKRQPSRGCYQCGGSGHLARDCDQRGSGGGGNDNACYKCGKEGHFARECSSVA</sequence>
<gene>
    <name type="primary">CSP1</name>
    <name type="synonym">CSDP1</name>
    <name type="ordered locus">At4g36020</name>
    <name type="ORF">T19K4.150</name>
</gene>
<name>CSP1_ARATH</name>
<keyword id="KW-0007">Acetylation</keyword>
<keyword id="KW-0143">Chaperone</keyword>
<keyword id="KW-0963">Cytoplasm</keyword>
<keyword id="KW-0238">DNA-binding</keyword>
<keyword id="KW-0479">Metal-binding</keyword>
<keyword id="KW-0539">Nucleus</keyword>
<keyword id="KW-1185">Reference proteome</keyword>
<keyword id="KW-0677">Repeat</keyword>
<keyword id="KW-0694">RNA-binding</keyword>
<keyword id="KW-0862">Zinc</keyword>
<keyword id="KW-0863">Zinc-finger</keyword>
<feature type="initiator methionine" description="Removed" evidence="9">
    <location>
        <position position="1"/>
    </location>
</feature>
<feature type="chain" id="PRO_0000418158" description="Cold shock protein 1">
    <location>
        <begin position="2"/>
        <end position="299"/>
    </location>
</feature>
<feature type="domain" description="CSD">
    <location>
        <begin position="12"/>
        <end position="76"/>
    </location>
</feature>
<feature type="zinc finger region" description="CCHC-type 1" evidence="2">
    <location>
        <begin position="100"/>
        <end position="117"/>
    </location>
</feature>
<feature type="zinc finger region" description="CCHC-type 2" evidence="2">
    <location>
        <begin position="132"/>
        <end position="149"/>
    </location>
</feature>
<feature type="zinc finger region" description="CCHC-type 3" evidence="2">
    <location>
        <begin position="164"/>
        <end position="181"/>
    </location>
</feature>
<feature type="zinc finger region" description="CCHC-type 4" evidence="2">
    <location>
        <begin position="198"/>
        <end position="215"/>
    </location>
</feature>
<feature type="zinc finger region" description="CCHC-type 5" evidence="2">
    <location>
        <begin position="230"/>
        <end position="247"/>
    </location>
</feature>
<feature type="zinc finger region" description="CCHC-type 6" evidence="2">
    <location>
        <begin position="253"/>
        <end position="270"/>
    </location>
</feature>
<feature type="zinc finger region" description="CCHC-type 7" evidence="2">
    <location>
        <begin position="280"/>
        <end position="297"/>
    </location>
</feature>
<feature type="region of interest" description="Disordered" evidence="3">
    <location>
        <begin position="76"/>
        <end position="97"/>
    </location>
</feature>
<feature type="modified residue" description="N-acetylalanine" evidence="9">
    <location>
        <position position="2"/>
    </location>
</feature>
<accession>O65639</accession>
<dbReference type="EMBL" id="AL022373">
    <property type="protein sequence ID" value="CAA18496.1"/>
    <property type="molecule type" value="Genomic_DNA"/>
</dbReference>
<dbReference type="EMBL" id="AL161588">
    <property type="protein sequence ID" value="CAB81511.1"/>
    <property type="molecule type" value="Genomic_DNA"/>
</dbReference>
<dbReference type="EMBL" id="CP002687">
    <property type="protein sequence ID" value="AEE86603.1"/>
    <property type="molecule type" value="Genomic_DNA"/>
</dbReference>
<dbReference type="EMBL" id="CP002687">
    <property type="protein sequence ID" value="ANM67851.1"/>
    <property type="molecule type" value="Genomic_DNA"/>
</dbReference>
<dbReference type="EMBL" id="AK226815">
    <property type="protein sequence ID" value="BAE98911.1"/>
    <property type="molecule type" value="mRNA"/>
</dbReference>
<dbReference type="PIR" id="T05494">
    <property type="entry name" value="T05494"/>
</dbReference>
<dbReference type="RefSeq" id="NP_001320149.1">
    <property type="nucleotide sequence ID" value="NM_001342395.1"/>
</dbReference>
<dbReference type="RefSeq" id="NP_195326.1">
    <property type="nucleotide sequence ID" value="NM_119769.4"/>
</dbReference>
<dbReference type="SMR" id="O65639"/>
<dbReference type="BioGRID" id="15040">
    <property type="interactions" value="6"/>
</dbReference>
<dbReference type="FunCoup" id="O65639">
    <property type="interactions" value="43"/>
</dbReference>
<dbReference type="IntAct" id="O65639">
    <property type="interactions" value="4"/>
</dbReference>
<dbReference type="STRING" id="3702.O65639"/>
<dbReference type="iPTMnet" id="O65639"/>
<dbReference type="PaxDb" id="3702-AT4G36020.1"/>
<dbReference type="ProteomicsDB" id="222624"/>
<dbReference type="EnsemblPlants" id="AT4G36020.1">
    <property type="protein sequence ID" value="AT4G36020.1"/>
    <property type="gene ID" value="AT4G36020"/>
</dbReference>
<dbReference type="EnsemblPlants" id="AT4G36020.3">
    <property type="protein sequence ID" value="AT4G36020.3"/>
    <property type="gene ID" value="AT4G36020"/>
</dbReference>
<dbReference type="GeneID" id="829758"/>
<dbReference type="Gramene" id="AT4G36020.1">
    <property type="protein sequence ID" value="AT4G36020.1"/>
    <property type="gene ID" value="AT4G36020"/>
</dbReference>
<dbReference type="Gramene" id="AT4G36020.3">
    <property type="protein sequence ID" value="AT4G36020.3"/>
    <property type="gene ID" value="AT4G36020"/>
</dbReference>
<dbReference type="KEGG" id="ath:AT4G36020"/>
<dbReference type="Araport" id="AT4G36020"/>
<dbReference type="TAIR" id="AT4G36020">
    <property type="gene designation" value="CSDP1"/>
</dbReference>
<dbReference type="eggNOG" id="KOG3070">
    <property type="taxonomic scope" value="Eukaryota"/>
</dbReference>
<dbReference type="HOGENOM" id="CLU_089169_3_0_1"/>
<dbReference type="InParanoid" id="O65639"/>
<dbReference type="OMA" id="RDCVQKS"/>
<dbReference type="PhylomeDB" id="O65639"/>
<dbReference type="PRO" id="PR:O65639"/>
<dbReference type="Proteomes" id="UP000006548">
    <property type="component" value="Chromosome 4"/>
</dbReference>
<dbReference type="ExpressionAtlas" id="O65639">
    <property type="expression patterns" value="baseline and differential"/>
</dbReference>
<dbReference type="GO" id="GO:0005737">
    <property type="term" value="C:cytoplasm"/>
    <property type="evidence" value="ECO:0000250"/>
    <property type="project" value="UniProtKB"/>
</dbReference>
<dbReference type="GO" id="GO:0005634">
    <property type="term" value="C:nucleus"/>
    <property type="evidence" value="ECO:0000250"/>
    <property type="project" value="UniProtKB"/>
</dbReference>
<dbReference type="GO" id="GO:0005886">
    <property type="term" value="C:plasma membrane"/>
    <property type="evidence" value="ECO:0007005"/>
    <property type="project" value="TAIR"/>
</dbReference>
<dbReference type="GO" id="GO:0003690">
    <property type="term" value="F:double-stranded DNA binding"/>
    <property type="evidence" value="ECO:0000314"/>
    <property type="project" value="TAIR"/>
</dbReference>
<dbReference type="GO" id="GO:0003729">
    <property type="term" value="F:mRNA binding"/>
    <property type="evidence" value="ECO:0000314"/>
    <property type="project" value="TAIR"/>
</dbReference>
<dbReference type="GO" id="GO:0003723">
    <property type="term" value="F:RNA binding"/>
    <property type="evidence" value="ECO:0000314"/>
    <property type="project" value="TAIR"/>
</dbReference>
<dbReference type="GO" id="GO:0003697">
    <property type="term" value="F:single-stranded DNA binding"/>
    <property type="evidence" value="ECO:0000314"/>
    <property type="project" value="TAIR"/>
</dbReference>
<dbReference type="GO" id="GO:0008270">
    <property type="term" value="F:zinc ion binding"/>
    <property type="evidence" value="ECO:0007669"/>
    <property type="project" value="UniProtKB-KW"/>
</dbReference>
<dbReference type="GO" id="GO:0009631">
    <property type="term" value="P:cold acclimation"/>
    <property type="evidence" value="ECO:0000316"/>
    <property type="project" value="UniProtKB"/>
</dbReference>
<dbReference type="GO" id="GO:0009409">
    <property type="term" value="P:response to cold"/>
    <property type="evidence" value="ECO:0000270"/>
    <property type="project" value="UniProtKB"/>
</dbReference>
<dbReference type="GO" id="GO:0009651">
    <property type="term" value="P:response to salt stress"/>
    <property type="evidence" value="ECO:0000270"/>
    <property type="project" value="UniProtKB"/>
</dbReference>
<dbReference type="GO" id="GO:0009414">
    <property type="term" value="P:response to water deprivation"/>
    <property type="evidence" value="ECO:0000270"/>
    <property type="project" value="UniProtKB"/>
</dbReference>
<dbReference type="CDD" id="cd04458">
    <property type="entry name" value="CSP_CDS"/>
    <property type="match status" value="1"/>
</dbReference>
<dbReference type="FunFam" id="2.40.50.140:FF:000382">
    <property type="entry name" value="Cold shock protein 1"/>
    <property type="match status" value="1"/>
</dbReference>
<dbReference type="FunFam" id="4.10.60.10:FF:000082">
    <property type="entry name" value="RNA recognition motif domain containing protein"/>
    <property type="match status" value="2"/>
</dbReference>
<dbReference type="Gene3D" id="2.40.50.140">
    <property type="entry name" value="Nucleic acid-binding proteins"/>
    <property type="match status" value="1"/>
</dbReference>
<dbReference type="Gene3D" id="4.10.60.10">
    <property type="entry name" value="Zinc finger, CCHC-type"/>
    <property type="match status" value="5"/>
</dbReference>
<dbReference type="InterPro" id="IPR011129">
    <property type="entry name" value="CSD"/>
</dbReference>
<dbReference type="InterPro" id="IPR019844">
    <property type="entry name" value="CSD_CS"/>
</dbReference>
<dbReference type="InterPro" id="IPR002059">
    <property type="entry name" value="CSP_DNA-bd"/>
</dbReference>
<dbReference type="InterPro" id="IPR012340">
    <property type="entry name" value="NA-bd_OB-fold"/>
</dbReference>
<dbReference type="InterPro" id="IPR001878">
    <property type="entry name" value="Znf_CCHC"/>
</dbReference>
<dbReference type="InterPro" id="IPR036875">
    <property type="entry name" value="Znf_CCHC_sf"/>
</dbReference>
<dbReference type="PANTHER" id="PTHR46565">
    <property type="entry name" value="COLD SHOCK DOMAIN PROTEIN 2"/>
    <property type="match status" value="1"/>
</dbReference>
<dbReference type="PANTHER" id="PTHR46565:SF23">
    <property type="entry name" value="COLD SHOCK DOMAIN-CONTAINING PROTEIN 3"/>
    <property type="match status" value="1"/>
</dbReference>
<dbReference type="Pfam" id="PF00313">
    <property type="entry name" value="CSD"/>
    <property type="match status" value="1"/>
</dbReference>
<dbReference type="Pfam" id="PF00098">
    <property type="entry name" value="zf-CCHC"/>
    <property type="match status" value="7"/>
</dbReference>
<dbReference type="PRINTS" id="PR00050">
    <property type="entry name" value="COLDSHOCK"/>
</dbReference>
<dbReference type="SMART" id="SM00357">
    <property type="entry name" value="CSP"/>
    <property type="match status" value="1"/>
</dbReference>
<dbReference type="SMART" id="SM00343">
    <property type="entry name" value="ZnF_C2HC"/>
    <property type="match status" value="7"/>
</dbReference>
<dbReference type="SUPFAM" id="SSF50249">
    <property type="entry name" value="Nucleic acid-binding proteins"/>
    <property type="match status" value="1"/>
</dbReference>
<dbReference type="SUPFAM" id="SSF57756">
    <property type="entry name" value="Retrovirus zinc finger-like domains"/>
    <property type="match status" value="5"/>
</dbReference>
<dbReference type="PROSITE" id="PS00352">
    <property type="entry name" value="CSD_1"/>
    <property type="match status" value="1"/>
</dbReference>
<dbReference type="PROSITE" id="PS51857">
    <property type="entry name" value="CSD_2"/>
    <property type="match status" value="1"/>
</dbReference>
<dbReference type="PROSITE" id="PS50158">
    <property type="entry name" value="ZF_CCHC"/>
    <property type="match status" value="7"/>
</dbReference>
<proteinExistence type="evidence at protein level"/>
<protein>
    <recommendedName>
        <fullName>Cold shock protein 1</fullName>
        <shortName>AtCSP1</shortName>
    </recommendedName>
    <alternativeName>
        <fullName>Cold shock domain-containing protein 1</fullName>
    </alternativeName>
</protein>
<evidence type="ECO:0000250" key="1"/>
<evidence type="ECO:0000255" key="2">
    <source>
        <dbReference type="PROSITE-ProRule" id="PRU00047"/>
    </source>
</evidence>
<evidence type="ECO:0000256" key="3">
    <source>
        <dbReference type="SAM" id="MobiDB-lite"/>
    </source>
</evidence>
<evidence type="ECO:0000269" key="4">
    <source>
    </source>
</evidence>
<evidence type="ECO:0000269" key="5">
    <source>
    </source>
</evidence>
<evidence type="ECO:0000269" key="6">
    <source>
    </source>
</evidence>
<evidence type="ECO:0000269" key="7">
    <source>
    </source>
</evidence>
<evidence type="ECO:0000305" key="8"/>
<evidence type="ECO:0007744" key="9">
    <source>
    </source>
</evidence>
<comment type="function">
    <text evidence="5 6 7">Chaperone that binds to RNA, single- (ssDNA) and double-stranded (dsDNA) DNA, and unwinds nucleic acid duplex. Exhibits a DNA melting activity. May be involved in cold resistance. Prevents seed germination under dehydration or salt stress conditions.</text>
</comment>
<comment type="subcellular location">
    <subcellularLocation>
        <location evidence="1">Nucleus</location>
    </subcellularLocation>
    <subcellularLocation>
        <location evidence="1">Cytoplasm</location>
    </subcellularLocation>
</comment>
<comment type="tissue specificity">
    <text evidence="7">Mostly expressed in shoot apices and siliques, and, to a lower extent, in roots, cotyledons, stems, shoots, leaves, floral buds and flowers.</text>
</comment>
<comment type="developmental stage">
    <text evidence="7">High expression in the earliest stage of silique development, with a decrease during the middle stages of silique development and subsequently an increase during the later stages.</text>
</comment>
<comment type="induction">
    <text evidence="4 5">Accumulates during cold acclimation, but down-regulated by dehydration and salt stresses.</text>
</comment>
<comment type="similarity">
    <text evidence="8">Belongs to the cold shock protein (CSP) family.</text>
</comment>
<organism>
    <name type="scientific">Arabidopsis thaliana</name>
    <name type="common">Mouse-ear cress</name>
    <dbReference type="NCBI Taxonomy" id="3702"/>
    <lineage>
        <taxon>Eukaryota</taxon>
        <taxon>Viridiplantae</taxon>
        <taxon>Streptophyta</taxon>
        <taxon>Embryophyta</taxon>
        <taxon>Tracheophyta</taxon>
        <taxon>Spermatophyta</taxon>
        <taxon>Magnoliopsida</taxon>
        <taxon>eudicotyledons</taxon>
        <taxon>Gunneridae</taxon>
        <taxon>Pentapetalae</taxon>
        <taxon>rosids</taxon>
        <taxon>malvids</taxon>
        <taxon>Brassicales</taxon>
        <taxon>Brassicaceae</taxon>
        <taxon>Camelineae</taxon>
        <taxon>Arabidopsis</taxon>
    </lineage>
</organism>
<reference key="1">
    <citation type="journal article" date="1999" name="Nature">
        <title>Sequence and analysis of chromosome 4 of the plant Arabidopsis thaliana.</title>
        <authorList>
            <person name="Mayer K.F.X."/>
            <person name="Schueller C."/>
            <person name="Wambutt R."/>
            <person name="Murphy G."/>
            <person name="Volckaert G."/>
            <person name="Pohl T."/>
            <person name="Duesterhoeft A."/>
            <person name="Stiekema W."/>
            <person name="Entian K.-D."/>
            <person name="Terryn N."/>
            <person name="Harris B."/>
            <person name="Ansorge W."/>
            <person name="Brandt P."/>
            <person name="Grivell L.A."/>
            <person name="Rieger M."/>
            <person name="Weichselgartner M."/>
            <person name="de Simone V."/>
            <person name="Obermaier B."/>
            <person name="Mache R."/>
            <person name="Mueller M."/>
            <person name="Kreis M."/>
            <person name="Delseny M."/>
            <person name="Puigdomenech P."/>
            <person name="Watson M."/>
            <person name="Schmidtheini T."/>
            <person name="Reichert B."/>
            <person name="Portetelle D."/>
            <person name="Perez-Alonso M."/>
            <person name="Boutry M."/>
            <person name="Bancroft I."/>
            <person name="Vos P."/>
            <person name="Hoheisel J."/>
            <person name="Zimmermann W."/>
            <person name="Wedler H."/>
            <person name="Ridley P."/>
            <person name="Langham S.-A."/>
            <person name="McCullagh B."/>
            <person name="Bilham L."/>
            <person name="Robben J."/>
            <person name="van der Schueren J."/>
            <person name="Grymonprez B."/>
            <person name="Chuang Y.-J."/>
            <person name="Vandenbussche F."/>
            <person name="Braeken M."/>
            <person name="Weltjens I."/>
            <person name="Voet M."/>
            <person name="Bastiaens I."/>
            <person name="Aert R."/>
            <person name="Defoor E."/>
            <person name="Weitzenegger T."/>
            <person name="Bothe G."/>
            <person name="Ramsperger U."/>
            <person name="Hilbert H."/>
            <person name="Braun M."/>
            <person name="Holzer E."/>
            <person name="Brandt A."/>
            <person name="Peters S."/>
            <person name="van Staveren M."/>
            <person name="Dirkse W."/>
            <person name="Mooijman P."/>
            <person name="Klein Lankhorst R."/>
            <person name="Rose M."/>
            <person name="Hauf J."/>
            <person name="Koetter P."/>
            <person name="Berneiser S."/>
            <person name="Hempel S."/>
            <person name="Feldpausch M."/>
            <person name="Lamberth S."/>
            <person name="Van den Daele H."/>
            <person name="De Keyser A."/>
            <person name="Buysshaert C."/>
            <person name="Gielen J."/>
            <person name="Villarroel R."/>
            <person name="De Clercq R."/>
            <person name="van Montagu M."/>
            <person name="Rogers J."/>
            <person name="Cronin A."/>
            <person name="Quail M.A."/>
            <person name="Bray-Allen S."/>
            <person name="Clark L."/>
            <person name="Doggett J."/>
            <person name="Hall S."/>
            <person name="Kay M."/>
            <person name="Lennard N."/>
            <person name="McLay K."/>
            <person name="Mayes R."/>
            <person name="Pettett A."/>
            <person name="Rajandream M.A."/>
            <person name="Lyne M."/>
            <person name="Benes V."/>
            <person name="Rechmann S."/>
            <person name="Borkova D."/>
            <person name="Bloecker H."/>
            <person name="Scharfe M."/>
            <person name="Grimm M."/>
            <person name="Loehnert T.-H."/>
            <person name="Dose S."/>
            <person name="de Haan M."/>
            <person name="Maarse A.C."/>
            <person name="Schaefer M."/>
            <person name="Mueller-Auer S."/>
            <person name="Gabel C."/>
            <person name="Fuchs M."/>
            <person name="Fartmann B."/>
            <person name="Granderath K."/>
            <person name="Dauner D."/>
            <person name="Herzl A."/>
            <person name="Neumann S."/>
            <person name="Argiriou A."/>
            <person name="Vitale D."/>
            <person name="Liguori R."/>
            <person name="Piravandi E."/>
            <person name="Massenet O."/>
            <person name="Quigley F."/>
            <person name="Clabauld G."/>
            <person name="Muendlein A."/>
            <person name="Felber R."/>
            <person name="Schnabl S."/>
            <person name="Hiller R."/>
            <person name="Schmidt W."/>
            <person name="Lecharny A."/>
            <person name="Aubourg S."/>
            <person name="Chefdor F."/>
            <person name="Cooke R."/>
            <person name="Berger C."/>
            <person name="Monfort A."/>
            <person name="Casacuberta E."/>
            <person name="Gibbons T."/>
            <person name="Weber N."/>
            <person name="Vandenbol M."/>
            <person name="Bargues M."/>
            <person name="Terol J."/>
            <person name="Torres A."/>
            <person name="Perez-Perez A."/>
            <person name="Purnelle B."/>
            <person name="Bent E."/>
            <person name="Johnson S."/>
            <person name="Tacon D."/>
            <person name="Jesse T."/>
            <person name="Heijnen L."/>
            <person name="Schwarz S."/>
            <person name="Scholler P."/>
            <person name="Heber S."/>
            <person name="Francs P."/>
            <person name="Bielke C."/>
            <person name="Frishman D."/>
            <person name="Haase D."/>
            <person name="Lemcke K."/>
            <person name="Mewes H.-W."/>
            <person name="Stocker S."/>
            <person name="Zaccaria P."/>
            <person name="Bevan M."/>
            <person name="Wilson R.K."/>
            <person name="de la Bastide M."/>
            <person name="Habermann K."/>
            <person name="Parnell L."/>
            <person name="Dedhia N."/>
            <person name="Gnoj L."/>
            <person name="Schutz K."/>
            <person name="Huang E."/>
            <person name="Spiegel L."/>
            <person name="Sekhon M."/>
            <person name="Murray J."/>
            <person name="Sheet P."/>
            <person name="Cordes M."/>
            <person name="Abu-Threideh J."/>
            <person name="Stoneking T."/>
            <person name="Kalicki J."/>
            <person name="Graves T."/>
            <person name="Harmon G."/>
            <person name="Edwards J."/>
            <person name="Latreille P."/>
            <person name="Courtney L."/>
            <person name="Cloud J."/>
            <person name="Abbott A."/>
            <person name="Scott K."/>
            <person name="Johnson D."/>
            <person name="Minx P."/>
            <person name="Bentley D."/>
            <person name="Fulton B."/>
            <person name="Miller N."/>
            <person name="Greco T."/>
            <person name="Kemp K."/>
            <person name="Kramer J."/>
            <person name="Fulton L."/>
            <person name="Mardis E."/>
            <person name="Dante M."/>
            <person name="Pepin K."/>
            <person name="Hillier L.W."/>
            <person name="Nelson J."/>
            <person name="Spieth J."/>
            <person name="Ryan E."/>
            <person name="Andrews S."/>
            <person name="Geisel C."/>
            <person name="Layman D."/>
            <person name="Du H."/>
            <person name="Ali J."/>
            <person name="Berghoff A."/>
            <person name="Jones K."/>
            <person name="Drone K."/>
            <person name="Cotton M."/>
            <person name="Joshu C."/>
            <person name="Antonoiu B."/>
            <person name="Zidanic M."/>
            <person name="Strong C."/>
            <person name="Sun H."/>
            <person name="Lamar B."/>
            <person name="Yordan C."/>
            <person name="Ma P."/>
            <person name="Zhong J."/>
            <person name="Preston R."/>
            <person name="Vil D."/>
            <person name="Shekher M."/>
            <person name="Matero A."/>
            <person name="Shah R."/>
            <person name="Swaby I.K."/>
            <person name="O'Shaughnessy A."/>
            <person name="Rodriguez M."/>
            <person name="Hoffman J."/>
            <person name="Till S."/>
            <person name="Granat S."/>
            <person name="Shohdy N."/>
            <person name="Hasegawa A."/>
            <person name="Hameed A."/>
            <person name="Lodhi M."/>
            <person name="Johnson A."/>
            <person name="Chen E."/>
            <person name="Marra M.A."/>
            <person name="Martienssen R."/>
            <person name="McCombie W.R."/>
        </authorList>
    </citation>
    <scope>NUCLEOTIDE SEQUENCE [LARGE SCALE GENOMIC DNA]</scope>
    <source>
        <strain>cv. Columbia</strain>
    </source>
</reference>
<reference key="2">
    <citation type="journal article" date="2017" name="Plant J.">
        <title>Araport11: a complete reannotation of the Arabidopsis thaliana reference genome.</title>
        <authorList>
            <person name="Cheng C.Y."/>
            <person name="Krishnakumar V."/>
            <person name="Chan A.P."/>
            <person name="Thibaud-Nissen F."/>
            <person name="Schobel S."/>
            <person name="Town C.D."/>
        </authorList>
    </citation>
    <scope>GENOME REANNOTATION</scope>
    <source>
        <strain>cv. Columbia</strain>
    </source>
</reference>
<reference key="3">
    <citation type="submission" date="2006-07" db="EMBL/GenBank/DDBJ databases">
        <title>Large-scale analysis of RIKEN Arabidopsis full-length (RAFL) cDNAs.</title>
        <authorList>
            <person name="Totoki Y."/>
            <person name="Seki M."/>
            <person name="Ishida J."/>
            <person name="Nakajima M."/>
            <person name="Enju A."/>
            <person name="Kamiya A."/>
            <person name="Narusaka M."/>
            <person name="Shin-i T."/>
            <person name="Nakagawa M."/>
            <person name="Sakamoto N."/>
            <person name="Oishi K."/>
            <person name="Kohara Y."/>
            <person name="Kobayashi M."/>
            <person name="Toyoda A."/>
            <person name="Sakaki Y."/>
            <person name="Sakurai T."/>
            <person name="Iida K."/>
            <person name="Akiyama K."/>
            <person name="Satou M."/>
            <person name="Toyoda T."/>
            <person name="Konagaya A."/>
            <person name="Carninci P."/>
            <person name="Kawai J."/>
            <person name="Hayashizaki Y."/>
            <person name="Shinozaki K."/>
        </authorList>
    </citation>
    <scope>NUCLEOTIDE SEQUENCE [LARGE SCALE MRNA]</scope>
    <source>
        <strain>cv. Columbia</strain>
    </source>
</reference>
<reference key="4">
    <citation type="journal article" date="2003" name="Plant Physiol.">
        <title>Conservation of the cold shock domain protein family in plants.</title>
        <authorList>
            <person name="Karlson D."/>
            <person name="Imai R."/>
        </authorList>
    </citation>
    <scope>INDUCTION BY COLD</scope>
    <scope>GENE FAMILY</scope>
</reference>
<reference key="5">
    <citation type="journal article" date="2007" name="Nucleic Acids Res.">
        <title>Cold shock domain proteins and glycine-rich RNA-binding proteins from Arabidopsis thaliana can promote the cold adaptation process in Escherichia coli.</title>
        <authorList>
            <person name="Kim J.S."/>
            <person name="Park S.J."/>
            <person name="Kwak K.J."/>
            <person name="Kim Y.O."/>
            <person name="Kim J.Y."/>
            <person name="Song J."/>
            <person name="Jang B."/>
            <person name="Jung C.-H."/>
            <person name="Kang H."/>
        </authorList>
    </citation>
    <scope>FUNCTION</scope>
    <scope>INDUCTION BY COLD</scope>
    <source>
        <strain>cv. Columbia</strain>
    </source>
</reference>
<reference key="6">
    <citation type="journal article" date="2009" name="J. Exp. Bot.">
        <title>Arabidopsis cold shock domain proteins: relationships to floral and silique development.</title>
        <authorList>
            <person name="Nakaminami K."/>
            <person name="Hill K."/>
            <person name="Perry S.E."/>
            <person name="Sentoku N."/>
            <person name="Long J.A."/>
            <person name="Karlson D.T."/>
        </authorList>
    </citation>
    <scope>FUNCTION</scope>
    <scope>TISSUE SPECIFICITY</scope>
    <scope>DEVELOPMENTAL STAGE</scope>
    <scope>GENE FAMILY</scope>
    <scope>NOMENCLATURE</scope>
    <source>
        <strain>cv. Columbia</strain>
        <strain>cv. Landsberg erecta</strain>
    </source>
</reference>
<reference key="7">
    <citation type="journal article" date="2009" name="Plant Cell Physiol.">
        <title>Cold shock domain proteins affect seed germination and growth of Arabidopsis thaliana under abiotic stress conditions.</title>
        <authorList>
            <person name="Park S.J."/>
            <person name="Kwak K.J."/>
            <person name="Oh T.R."/>
            <person name="Kim Y.O."/>
            <person name="Kang H."/>
        </authorList>
    </citation>
    <scope>FUNCTION</scope>
</reference>
<reference key="8">
    <citation type="journal article" date="2012" name="Mol. Cell. Proteomics">
        <title>Comparative large-scale characterisation of plant vs. mammal proteins reveals similar and idiosyncratic N-alpha acetylation features.</title>
        <authorList>
            <person name="Bienvenut W.V."/>
            <person name="Sumpton D."/>
            <person name="Martinez A."/>
            <person name="Lilla S."/>
            <person name="Espagne C."/>
            <person name="Meinnel T."/>
            <person name="Giglione C."/>
        </authorList>
    </citation>
    <scope>ACETYLATION [LARGE SCALE ANALYSIS] AT ALA-2</scope>
    <scope>CLEAVAGE OF INITIATOR METHIONINE [LARGE SCALE ANALYSIS]</scope>
    <scope>IDENTIFICATION BY MASS SPECTROMETRY [LARGE SCALE ANALYSIS]</scope>
</reference>